<keyword id="KW-0687">Ribonucleoprotein</keyword>
<keyword id="KW-0689">Ribosomal protein</keyword>
<keyword id="KW-0694">RNA-binding</keyword>
<keyword id="KW-0699">rRNA-binding</keyword>
<proteinExistence type="inferred from homology"/>
<organism>
    <name type="scientific">Streptococcus pyogenes serotype M49 (strain NZ131)</name>
    <dbReference type="NCBI Taxonomy" id="471876"/>
    <lineage>
        <taxon>Bacteria</taxon>
        <taxon>Bacillati</taxon>
        <taxon>Bacillota</taxon>
        <taxon>Bacilli</taxon>
        <taxon>Lactobacillales</taxon>
        <taxon>Streptococcaceae</taxon>
        <taxon>Streptococcus</taxon>
    </lineage>
</organism>
<gene>
    <name evidence="1" type="primary">rpsH</name>
    <name type="ordered locus">Spy49_0061</name>
</gene>
<dbReference type="EMBL" id="CP000829">
    <property type="protein sequence ID" value="ACI60418.1"/>
    <property type="molecule type" value="Genomic_DNA"/>
</dbReference>
<dbReference type="SMR" id="B5XJ50"/>
<dbReference type="KEGG" id="soz:Spy49_0061"/>
<dbReference type="HOGENOM" id="CLU_098428_0_2_9"/>
<dbReference type="Proteomes" id="UP000001039">
    <property type="component" value="Chromosome"/>
</dbReference>
<dbReference type="GO" id="GO:1990904">
    <property type="term" value="C:ribonucleoprotein complex"/>
    <property type="evidence" value="ECO:0007669"/>
    <property type="project" value="UniProtKB-KW"/>
</dbReference>
<dbReference type="GO" id="GO:0005840">
    <property type="term" value="C:ribosome"/>
    <property type="evidence" value="ECO:0007669"/>
    <property type="project" value="UniProtKB-KW"/>
</dbReference>
<dbReference type="GO" id="GO:0019843">
    <property type="term" value="F:rRNA binding"/>
    <property type="evidence" value="ECO:0007669"/>
    <property type="project" value="UniProtKB-UniRule"/>
</dbReference>
<dbReference type="GO" id="GO:0003735">
    <property type="term" value="F:structural constituent of ribosome"/>
    <property type="evidence" value="ECO:0007669"/>
    <property type="project" value="InterPro"/>
</dbReference>
<dbReference type="GO" id="GO:0006412">
    <property type="term" value="P:translation"/>
    <property type="evidence" value="ECO:0007669"/>
    <property type="project" value="UniProtKB-UniRule"/>
</dbReference>
<dbReference type="FunFam" id="3.30.1370.30:FF:000002">
    <property type="entry name" value="30S ribosomal protein S8"/>
    <property type="match status" value="1"/>
</dbReference>
<dbReference type="FunFam" id="3.30.1490.10:FF:000001">
    <property type="entry name" value="30S ribosomal protein S8"/>
    <property type="match status" value="1"/>
</dbReference>
<dbReference type="Gene3D" id="3.30.1370.30">
    <property type="match status" value="1"/>
</dbReference>
<dbReference type="Gene3D" id="3.30.1490.10">
    <property type="match status" value="1"/>
</dbReference>
<dbReference type="HAMAP" id="MF_01302_B">
    <property type="entry name" value="Ribosomal_uS8_B"/>
    <property type="match status" value="1"/>
</dbReference>
<dbReference type="InterPro" id="IPR000630">
    <property type="entry name" value="Ribosomal_uS8"/>
</dbReference>
<dbReference type="InterPro" id="IPR047863">
    <property type="entry name" value="Ribosomal_uS8_CS"/>
</dbReference>
<dbReference type="InterPro" id="IPR035987">
    <property type="entry name" value="Ribosomal_uS8_sf"/>
</dbReference>
<dbReference type="NCBIfam" id="NF001109">
    <property type="entry name" value="PRK00136.1"/>
    <property type="match status" value="1"/>
</dbReference>
<dbReference type="PANTHER" id="PTHR11758">
    <property type="entry name" value="40S RIBOSOMAL PROTEIN S15A"/>
    <property type="match status" value="1"/>
</dbReference>
<dbReference type="Pfam" id="PF00410">
    <property type="entry name" value="Ribosomal_S8"/>
    <property type="match status" value="1"/>
</dbReference>
<dbReference type="SUPFAM" id="SSF56047">
    <property type="entry name" value="Ribosomal protein S8"/>
    <property type="match status" value="1"/>
</dbReference>
<dbReference type="PROSITE" id="PS00053">
    <property type="entry name" value="RIBOSOMAL_S8"/>
    <property type="match status" value="1"/>
</dbReference>
<name>RS8_STRPZ</name>
<evidence type="ECO:0000255" key="1">
    <source>
        <dbReference type="HAMAP-Rule" id="MF_01302"/>
    </source>
</evidence>
<evidence type="ECO:0000305" key="2"/>
<protein>
    <recommendedName>
        <fullName evidence="1">Small ribosomal subunit protein uS8</fullName>
    </recommendedName>
    <alternativeName>
        <fullName evidence="2">30S ribosomal protein S8</fullName>
    </alternativeName>
</protein>
<accession>B5XJ50</accession>
<comment type="function">
    <text evidence="1">One of the primary rRNA binding proteins, it binds directly to 16S rRNA central domain where it helps coordinate assembly of the platform of the 30S subunit.</text>
</comment>
<comment type="subunit">
    <text evidence="1">Part of the 30S ribosomal subunit. Contacts proteins S5 and S12.</text>
</comment>
<comment type="similarity">
    <text evidence="1">Belongs to the universal ribosomal protein uS8 family.</text>
</comment>
<reference key="1">
    <citation type="journal article" date="2008" name="J. Bacteriol.">
        <title>Genome sequence of a nephritogenic and highly transformable M49 strain of Streptococcus pyogenes.</title>
        <authorList>
            <person name="McShan W.M."/>
            <person name="Ferretti J.J."/>
            <person name="Karasawa T."/>
            <person name="Suvorov A.N."/>
            <person name="Lin S."/>
            <person name="Qin B."/>
            <person name="Jia H."/>
            <person name="Kenton S."/>
            <person name="Najar F."/>
            <person name="Wu H."/>
            <person name="Scott J."/>
            <person name="Roe B.A."/>
            <person name="Savic D.J."/>
        </authorList>
    </citation>
    <scope>NUCLEOTIDE SEQUENCE [LARGE SCALE GENOMIC DNA]</scope>
    <source>
        <strain>NZ131</strain>
    </source>
</reference>
<sequence>MVMTDPIADFLTRIRNANQVKHEVLEVPASNIKKGIAEILKREGFVKNVEVIEDDKQGIIRVFLKYGKNGERVITNLKRISKPGLRVYAKRDDMPKVLNGLGIAIISTSEGLLTDKEARQKNVGGEVVAYVW</sequence>
<feature type="chain" id="PRO_1000140622" description="Small ribosomal subunit protein uS8">
    <location>
        <begin position="1"/>
        <end position="132"/>
    </location>
</feature>